<accession>P40159</accession>
<accession>D6W0Y2</accession>
<sequence>MSANEFYSSGQQGQYNQQNNQERTGAPNNGQYGADNGNPNGERGLFSTIVGGSAGAYAGSKVSNNHSKLSGVLGAIGGAFLANKISDERKEHKQQEQYGNSNFGGAPQGGHNNHHRQDNNNNNGGFGGPGGPGGQGFGRQGPQGFGGPGPQEFGGPGGQGFGGPNPQEFGGPGGQGFGGPNPQEFGGQGRQGFNGGSRW</sequence>
<gene>
    <name type="ordered locus">YNL208W</name>
    <name type="ORF">N1338</name>
</gene>
<keyword id="KW-0007">Acetylation</keyword>
<keyword id="KW-0496">Mitochondrion</keyword>
<keyword id="KW-0597">Phosphoprotein</keyword>
<keyword id="KW-1185">Reference proteome</keyword>
<reference key="1">
    <citation type="journal article" date="1994" name="Yeast">
        <title>A 21.7 kb DNA segment on the left arm of yeast chromosome XIV carries WHI3, GCR2, SPX18, SPX19, an homologue to the heat shock gene SSB1 and 8 new open reading frames of unknown function.</title>
        <authorList>
            <person name="Jonniaux J.-L."/>
            <person name="Coster F."/>
            <person name="Purnelle B."/>
            <person name="Goffeau A."/>
        </authorList>
    </citation>
    <scope>NUCLEOTIDE SEQUENCE [GENOMIC DNA]</scope>
    <source>
        <strain>ATCC 96604 / S288c / FY1679</strain>
    </source>
</reference>
<reference key="2">
    <citation type="journal article" date="1997" name="Nature">
        <title>The nucleotide sequence of Saccharomyces cerevisiae chromosome XIV and its evolutionary implications.</title>
        <authorList>
            <person name="Philippsen P."/>
            <person name="Kleine K."/>
            <person name="Poehlmann R."/>
            <person name="Duesterhoeft A."/>
            <person name="Hamberg K."/>
            <person name="Hegemann J.H."/>
            <person name="Obermaier B."/>
            <person name="Urrestarazu L.A."/>
            <person name="Aert R."/>
            <person name="Albermann K."/>
            <person name="Altmann R."/>
            <person name="Andre B."/>
            <person name="Baladron V."/>
            <person name="Ballesta J.P.G."/>
            <person name="Becam A.-M."/>
            <person name="Beinhauer J.D."/>
            <person name="Boskovic J."/>
            <person name="Buitrago M.J."/>
            <person name="Bussereau F."/>
            <person name="Coster F."/>
            <person name="Crouzet M."/>
            <person name="D'Angelo M."/>
            <person name="Dal Pero F."/>
            <person name="De Antoni A."/>
            <person name="del Rey F."/>
            <person name="Doignon F."/>
            <person name="Domdey H."/>
            <person name="Dubois E."/>
            <person name="Fiedler T.A."/>
            <person name="Fleig U."/>
            <person name="Floeth M."/>
            <person name="Fritz C."/>
            <person name="Gaillardin C."/>
            <person name="Garcia-Cantalejo J.M."/>
            <person name="Glansdorff N."/>
            <person name="Goffeau A."/>
            <person name="Gueldener U."/>
            <person name="Herbert C.J."/>
            <person name="Heumann K."/>
            <person name="Heuss-Neitzel D."/>
            <person name="Hilbert H."/>
            <person name="Hinni K."/>
            <person name="Iraqui Houssaini I."/>
            <person name="Jacquet M."/>
            <person name="Jimenez A."/>
            <person name="Jonniaux J.-L."/>
            <person name="Karpfinger-Hartl L."/>
            <person name="Lanfranchi G."/>
            <person name="Lepingle A."/>
            <person name="Levesque H."/>
            <person name="Lyck R."/>
            <person name="Maftahi M."/>
            <person name="Mallet L."/>
            <person name="Maurer C.T.C."/>
            <person name="Messenguy F."/>
            <person name="Mewes H.-W."/>
            <person name="Moestl D."/>
            <person name="Nasr F."/>
            <person name="Nicaud J.-M."/>
            <person name="Niedenthal R.K."/>
            <person name="Pandolfo D."/>
            <person name="Pierard A."/>
            <person name="Piravandi E."/>
            <person name="Planta R.J."/>
            <person name="Pohl T.M."/>
            <person name="Purnelle B."/>
            <person name="Rebischung C."/>
            <person name="Remacha M.A."/>
            <person name="Revuelta J.L."/>
            <person name="Rinke M."/>
            <person name="Saiz J.E."/>
            <person name="Sartorello F."/>
            <person name="Scherens B."/>
            <person name="Sen-Gupta M."/>
            <person name="Soler-Mira A."/>
            <person name="Urbanus J.H.M."/>
            <person name="Valle G."/>
            <person name="Van Dyck L."/>
            <person name="Verhasselt P."/>
            <person name="Vierendeels F."/>
            <person name="Vissers S."/>
            <person name="Voet M."/>
            <person name="Volckaert G."/>
            <person name="Wach A."/>
            <person name="Wambutt R."/>
            <person name="Wedler H."/>
            <person name="Zollner A."/>
            <person name="Hani J."/>
        </authorList>
    </citation>
    <scope>NUCLEOTIDE SEQUENCE [LARGE SCALE GENOMIC DNA]</scope>
    <source>
        <strain>ATCC 204508 / S288c</strain>
    </source>
</reference>
<reference key="3">
    <citation type="journal article" date="2014" name="G3 (Bethesda)">
        <title>The reference genome sequence of Saccharomyces cerevisiae: Then and now.</title>
        <authorList>
            <person name="Engel S.R."/>
            <person name="Dietrich F.S."/>
            <person name="Fisk D.G."/>
            <person name="Binkley G."/>
            <person name="Balakrishnan R."/>
            <person name="Costanzo M.C."/>
            <person name="Dwight S.S."/>
            <person name="Hitz B.C."/>
            <person name="Karra K."/>
            <person name="Nash R.S."/>
            <person name="Weng S."/>
            <person name="Wong E.D."/>
            <person name="Lloyd P."/>
            <person name="Skrzypek M.S."/>
            <person name="Miyasato S.R."/>
            <person name="Simison M."/>
            <person name="Cherry J.M."/>
        </authorList>
    </citation>
    <scope>GENOME REANNOTATION</scope>
    <source>
        <strain>ATCC 204508 / S288c</strain>
    </source>
</reference>
<reference key="4">
    <citation type="journal article" date="2003" name="Nature">
        <title>Sequencing and comparison of yeast species to identify genes and regulatory elements.</title>
        <authorList>
            <person name="Kellis M."/>
            <person name="Patterson N."/>
            <person name="Endrizzi M."/>
            <person name="Birren B.W."/>
            <person name="Lander E.S."/>
        </authorList>
    </citation>
    <scope>IDENTIFICATION OF PROBABLE FRAMESHIFTS</scope>
</reference>
<reference key="5">
    <citation type="journal article" date="2003" name="Proc. Natl. Acad. Sci. U.S.A.">
        <title>The proteome of Saccharomyces cerevisiae mitochondria.</title>
        <authorList>
            <person name="Sickmann A."/>
            <person name="Reinders J."/>
            <person name="Wagner Y."/>
            <person name="Joppich C."/>
            <person name="Zahedi R.P."/>
            <person name="Meyer H.E."/>
            <person name="Schoenfisch B."/>
            <person name="Perschil I."/>
            <person name="Chacinska A."/>
            <person name="Guiard B."/>
            <person name="Rehling P."/>
            <person name="Pfanner N."/>
            <person name="Meisinger C."/>
        </authorList>
    </citation>
    <scope>SUBCELLULAR LOCATION [LARGE SCALE ANALYSIS]</scope>
    <source>
        <strain>ATCC 76625 / YPH499</strain>
    </source>
</reference>
<reference key="6">
    <citation type="journal article" date="2008" name="Mol. Cell. Proteomics">
        <title>A multidimensional chromatography technology for in-depth phosphoproteome analysis.</title>
        <authorList>
            <person name="Albuquerque C.P."/>
            <person name="Smolka M.B."/>
            <person name="Payne S.H."/>
            <person name="Bafna V."/>
            <person name="Eng J."/>
            <person name="Zhou H."/>
        </authorList>
    </citation>
    <scope>PHOSPHORYLATION [LARGE SCALE ANALYSIS] AT SER-53</scope>
    <scope>IDENTIFICATION BY MASS SPECTROMETRY [LARGE SCALE ANALYSIS]</scope>
</reference>
<reference key="7">
    <citation type="journal article" date="2009" name="Science">
        <title>Global analysis of Cdk1 substrate phosphorylation sites provides insights into evolution.</title>
        <authorList>
            <person name="Holt L.J."/>
            <person name="Tuch B.B."/>
            <person name="Villen J."/>
            <person name="Johnson A.D."/>
            <person name="Gygi S.P."/>
            <person name="Morgan D.O."/>
        </authorList>
    </citation>
    <scope>PHOSPHORYLATION [LARGE SCALE ANALYSIS] AT SER-70</scope>
    <scope>IDENTIFICATION BY MASS SPECTROMETRY [LARGE SCALE ANALYSIS]</scope>
</reference>
<reference key="8">
    <citation type="journal article" date="2012" name="Proc. Natl. Acad. Sci. U.S.A.">
        <title>N-terminal acetylome analyses and functional insights of the N-terminal acetyltransferase NatB.</title>
        <authorList>
            <person name="Van Damme P."/>
            <person name="Lasa M."/>
            <person name="Polevoda B."/>
            <person name="Gazquez C."/>
            <person name="Elosegui-Artola A."/>
            <person name="Kim D.S."/>
            <person name="De Juan-Pardo E."/>
            <person name="Demeyer K."/>
            <person name="Hole K."/>
            <person name="Larrea E."/>
            <person name="Timmerman E."/>
            <person name="Prieto J."/>
            <person name="Arnesen T."/>
            <person name="Sherman F."/>
            <person name="Gevaert K."/>
            <person name="Aldabe R."/>
        </authorList>
    </citation>
    <scope>ACETYLATION [LARGE SCALE ANALYSIS] AT SER-2</scope>
    <scope>CLEAVAGE OF INITIATOR METHIONINE [LARGE SCALE ANALYSIS]</scope>
    <scope>IDENTIFICATION BY MASS SPECTROMETRY [LARGE SCALE ANALYSIS]</scope>
</reference>
<comment type="subcellular location">
    <subcellularLocation>
        <location evidence="2">Mitochondrion</location>
    </subcellularLocation>
</comment>
<comment type="sequence caution" evidence="3">
    <conflict type="frameshift">
        <sequence resource="EMBL-CDS" id="CAA55500"/>
    </conflict>
</comment>
<comment type="sequence caution" evidence="3">
    <conflict type="frameshift">
        <sequence resource="EMBL-CDS" id="CAA96110"/>
    </conflict>
</comment>
<protein>
    <recommendedName>
        <fullName>Uncharacterized protein YNL208W</fullName>
    </recommendedName>
</protein>
<feature type="initiator methionine" description="Removed" evidence="6">
    <location>
        <position position="1"/>
    </location>
</feature>
<feature type="chain" id="PRO_0000203391" description="Uncharacterized protein YNL208W">
    <location>
        <begin position="2"/>
        <end position="199"/>
    </location>
</feature>
<feature type="region of interest" description="Disordered" evidence="1">
    <location>
        <begin position="1"/>
        <end position="48"/>
    </location>
</feature>
<feature type="region of interest" description="Disordered" evidence="1">
    <location>
        <begin position="89"/>
        <end position="199"/>
    </location>
</feature>
<feature type="compositionally biased region" description="Low complexity" evidence="1">
    <location>
        <begin position="7"/>
        <end position="21"/>
    </location>
</feature>
<feature type="compositionally biased region" description="Polar residues" evidence="1">
    <location>
        <begin position="22"/>
        <end position="31"/>
    </location>
</feature>
<feature type="compositionally biased region" description="Gly residues" evidence="1">
    <location>
        <begin position="124"/>
        <end position="163"/>
    </location>
</feature>
<feature type="compositionally biased region" description="Gly residues" evidence="1">
    <location>
        <begin position="170"/>
        <end position="179"/>
    </location>
</feature>
<feature type="compositionally biased region" description="Gly residues" evidence="1">
    <location>
        <begin position="186"/>
        <end position="199"/>
    </location>
</feature>
<feature type="modified residue" description="N-acetylserine" evidence="6">
    <location>
        <position position="2"/>
    </location>
</feature>
<feature type="modified residue" description="Phosphoserine" evidence="4">
    <location>
        <position position="53"/>
    </location>
</feature>
<feature type="modified residue" description="Phosphoserine" evidence="5">
    <location>
        <position position="70"/>
    </location>
</feature>
<proteinExistence type="evidence at protein level"/>
<evidence type="ECO:0000256" key="1">
    <source>
        <dbReference type="SAM" id="MobiDB-lite"/>
    </source>
</evidence>
<evidence type="ECO:0000269" key="2">
    <source>
    </source>
</evidence>
<evidence type="ECO:0000305" key="3"/>
<evidence type="ECO:0007744" key="4">
    <source>
    </source>
</evidence>
<evidence type="ECO:0007744" key="5">
    <source>
    </source>
</evidence>
<evidence type="ECO:0007744" key="6">
    <source>
    </source>
</evidence>
<organism>
    <name type="scientific">Saccharomyces cerevisiae (strain ATCC 204508 / S288c)</name>
    <name type="common">Baker's yeast</name>
    <dbReference type="NCBI Taxonomy" id="559292"/>
    <lineage>
        <taxon>Eukaryota</taxon>
        <taxon>Fungi</taxon>
        <taxon>Dikarya</taxon>
        <taxon>Ascomycota</taxon>
        <taxon>Saccharomycotina</taxon>
        <taxon>Saccharomycetes</taxon>
        <taxon>Saccharomycetales</taxon>
        <taxon>Saccharomycetaceae</taxon>
        <taxon>Saccharomyces</taxon>
    </lineage>
</organism>
<dbReference type="EMBL" id="X78898">
    <property type="protein sequence ID" value="CAA55500.1"/>
    <property type="status" value="ALT_FRAME"/>
    <property type="molecule type" value="Genomic_DNA"/>
</dbReference>
<dbReference type="EMBL" id="Z71484">
    <property type="protein sequence ID" value="CAA96110.1"/>
    <property type="status" value="ALT_FRAME"/>
    <property type="molecule type" value="Genomic_DNA"/>
</dbReference>
<dbReference type="EMBL" id="BK006947">
    <property type="protein sequence ID" value="DAA10348.1"/>
    <property type="molecule type" value="Genomic_DNA"/>
</dbReference>
<dbReference type="PIR" id="S50723">
    <property type="entry name" value="S50723"/>
</dbReference>
<dbReference type="RefSeq" id="NP_014191.2">
    <property type="nucleotide sequence ID" value="NM_001183046.1"/>
</dbReference>
<dbReference type="SMR" id="P40159"/>
<dbReference type="BioGRID" id="35628">
    <property type="interactions" value="63"/>
</dbReference>
<dbReference type="DIP" id="DIP-4088N"/>
<dbReference type="FunCoup" id="P40159">
    <property type="interactions" value="280"/>
</dbReference>
<dbReference type="IntAct" id="P40159">
    <property type="interactions" value="18"/>
</dbReference>
<dbReference type="MINT" id="P40159"/>
<dbReference type="STRING" id="4932.YNL208W"/>
<dbReference type="iPTMnet" id="P40159"/>
<dbReference type="PaxDb" id="4932-YNL208W"/>
<dbReference type="PeptideAtlas" id="P40159"/>
<dbReference type="EnsemblFungi" id="YNL208W_mRNA">
    <property type="protein sequence ID" value="YNL208W"/>
    <property type="gene ID" value="YNL208W"/>
</dbReference>
<dbReference type="GeneID" id="855513"/>
<dbReference type="KEGG" id="sce:YNL208W"/>
<dbReference type="AGR" id="SGD:S000005152"/>
<dbReference type="SGD" id="S000005152">
    <property type="gene designation" value="YNL208W"/>
</dbReference>
<dbReference type="VEuPathDB" id="FungiDB:YNL208W"/>
<dbReference type="eggNOG" id="ENOG502S756">
    <property type="taxonomic scope" value="Eukaryota"/>
</dbReference>
<dbReference type="HOGENOM" id="CLU_1289243_0_0_1"/>
<dbReference type="InParanoid" id="P40159"/>
<dbReference type="OMA" id="YGRNDNY"/>
<dbReference type="OrthoDB" id="4070509at2759"/>
<dbReference type="BioCyc" id="YEAST:G3O-33214-MONOMER"/>
<dbReference type="BioGRID-ORCS" id="855513">
    <property type="hits" value="2 hits in 10 CRISPR screens"/>
</dbReference>
<dbReference type="PRO" id="PR:P40159"/>
<dbReference type="Proteomes" id="UP000002311">
    <property type="component" value="Chromosome XIV"/>
</dbReference>
<dbReference type="RNAct" id="P40159">
    <property type="molecule type" value="protein"/>
</dbReference>
<dbReference type="GO" id="GO:0005739">
    <property type="term" value="C:mitochondrion"/>
    <property type="evidence" value="ECO:0007005"/>
    <property type="project" value="SGD"/>
</dbReference>
<dbReference type="GO" id="GO:0019867">
    <property type="term" value="C:outer membrane"/>
    <property type="evidence" value="ECO:0007669"/>
    <property type="project" value="InterPro"/>
</dbReference>
<dbReference type="InterPro" id="IPR008816">
    <property type="entry name" value="Gly_zipper_2TM_dom"/>
</dbReference>
<dbReference type="PANTHER" id="PTHR37014">
    <property type="entry name" value="EXPRESSION LETHALITY PROTEIN HEL10, PUTATIVE (AFU_ORTHOLOGUE AFUA_1G06580)-RELATED"/>
    <property type="match status" value="1"/>
</dbReference>
<dbReference type="PANTHER" id="PTHR37014:SF10">
    <property type="entry name" value="RICH PROTEIN MS8, PUTATIVE (AFU_ORTHOLOGUE AFUA_7G05650)-RELATED"/>
    <property type="match status" value="1"/>
</dbReference>
<dbReference type="Pfam" id="PF05433">
    <property type="entry name" value="Rick_17kDa_Anti"/>
    <property type="match status" value="1"/>
</dbReference>
<name>YNU8_YEAST</name>